<evidence type="ECO:0000255" key="1"/>
<evidence type="ECO:0000269" key="2">
    <source>
    </source>
</evidence>
<evidence type="ECO:0000269" key="3">
    <source>
    </source>
</evidence>
<evidence type="ECO:0000303" key="4">
    <source>
    </source>
</evidence>
<evidence type="ECO:0000305" key="5"/>
<sequence length="688" mass="77964">MKPLSLLIEILIILGVTIKTIKAEEHNKRQKERNVTTQVSVNEIKQYLSHILEQRTSSNVINKRENLLEKKKNQRKIRIKGIQNKDILKRNKNHLQKQAEKNFTDEGDQLFKMGIKVLQQSKSQKQKEEAYLLFAKAADMGNLKAMEKMADALLFGNFGVQNITAAIQLYESLAKEGSCKAQNALGFLSSYGIGMEYDQAKALIYYTFGSAGGNMMSQMILGYRYLSGINVLQNCEVALSYYKKVADYIADTFEKSEGVPVEKVRLTERPENLSSNSEILDWDIYQYYKFLAERGDVQIQVSLGQLHLIGRKGLDQDYYKALHYFLKAAKAGSANAMAFIGKMYLEGNAAVPQNNATAFKYFSMAASKGNAIGLHGLGLLYFHGKGVPLNYAEALKYFQKAAEKGWPDAQFQLGFMYYSGSGIWKDYKLAFKYFYLASQSGQPLAIYYLAKMYATGTGVVRSCRTAVELYKGVCELGHWAEKFLTAYFAYKDGDIDSSLVQYALLAEMGYEVAQSNSAFILESKKANILEKEKMYPMALLLWNRAAIQGNAFARVKIGDYHYYGYGTKKDYQTAATHYSIAANKYHNAQAMFNLAYMYEHGLGITKDIHLARRLYDMAAQTSPDAHIPVLFAVMKLETTHLLRDILFFNFTTRWNWLKLDNTIGPHWDLFVIGLIVPGLILLLRNHHG</sequence>
<comment type="subcellular location">
    <subcellularLocation>
        <location evidence="1">Membrane</location>
        <topology evidence="1">Single-pass type I membrane protein</topology>
    </subcellularLocation>
    <subcellularLocation>
        <location evidence="3">Cell projection</location>
        <location evidence="3">Cilium</location>
    </subcellularLocation>
    <subcellularLocation>
        <location evidence="2">Nucleus speckle</location>
    </subcellularLocation>
</comment>
<comment type="alternative products">
    <event type="alternative splicing"/>
    <isoform>
        <id>Q5TEA6-1</id>
        <name>1</name>
        <sequence type="displayed"/>
    </isoform>
    <isoform>
        <id>Q5TEA6-2</id>
        <name>2</name>
        <sequence type="described" ref="VSP_046937"/>
    </isoform>
</comment>
<comment type="similarity">
    <text evidence="5">Belongs to the sel-1 family.</text>
</comment>
<gene>
    <name type="primary">SEL1L2</name>
    <name type="synonym">C20orf50</name>
</gene>
<proteinExistence type="evidence at protein level"/>
<feature type="signal peptide" evidence="1">
    <location>
        <begin position="1"/>
        <end position="23"/>
    </location>
</feature>
<feature type="chain" id="PRO_0000305159" description="Protein sel-1 homolog 2">
    <location>
        <begin position="24"/>
        <end position="688"/>
    </location>
</feature>
<feature type="topological domain" description="Extracellular" evidence="1">
    <location>
        <begin position="24"/>
        <end position="662"/>
    </location>
</feature>
<feature type="transmembrane region" description="Helical" evidence="1">
    <location>
        <begin position="663"/>
        <end position="683"/>
    </location>
</feature>
<feature type="topological domain" description="Cytoplasmic" evidence="1">
    <location>
        <begin position="684"/>
        <end position="688"/>
    </location>
</feature>
<feature type="repeat" description="Sel1-like 1">
    <location>
        <begin position="107"/>
        <end position="142"/>
    </location>
</feature>
<feature type="repeat" description="Sel1-like 2">
    <location>
        <begin position="143"/>
        <end position="178"/>
    </location>
</feature>
<feature type="repeat" description="Sel1-like 3">
    <location>
        <begin position="179"/>
        <end position="214"/>
    </location>
</feature>
<feature type="repeat" description="Sel1-like 4">
    <location>
        <begin position="215"/>
        <end position="250"/>
    </location>
</feature>
<feature type="repeat" description="Sel1-like 5">
    <location>
        <begin position="297"/>
        <end position="333"/>
    </location>
</feature>
<feature type="repeat" description="Sel1-like 6">
    <location>
        <begin position="334"/>
        <end position="370"/>
    </location>
</feature>
<feature type="repeat" description="Sel1-like 7">
    <location>
        <begin position="371"/>
        <end position="406"/>
    </location>
</feature>
<feature type="repeat" description="Sel1-like 8">
    <location>
        <begin position="407"/>
        <end position="442"/>
    </location>
</feature>
<feature type="repeat" description="Sel1-like 9">
    <location>
        <begin position="443"/>
        <end position="478"/>
    </location>
</feature>
<feature type="repeat" description="Sel1-like 10">
    <location>
        <begin position="551"/>
        <end position="586"/>
    </location>
</feature>
<feature type="repeat" description="Sel1-like 11">
    <location>
        <begin position="588"/>
        <end position="623"/>
    </location>
</feature>
<feature type="glycosylation site" description="N-linked (GlcNAc...) asparagine" evidence="1">
    <location>
        <position position="34"/>
    </location>
</feature>
<feature type="splice variant" id="VSP_046937" description="In isoform 2." evidence="4">
    <original>LYKGVCELGHWAEKFLTAYFAYKDGDIDSSLVQYALLAEMGYEVAQSNSAFILESKKANILEKEKMYPMALLLWNRAAIQGNAFARVKIGDYHYYGYGTKKDYQTAATHYSIAANKYHNAQAMFNLAYMYEHGLGIT</original>
    <variation>KRLTFLKKRRCIQWRFSYGIELPF</variation>
    <location>
        <begin position="469"/>
        <end position="605"/>
    </location>
</feature>
<feature type="sequence variant" id="VAR_053964" description="In dbSNP:rs11697581.">
    <original>G</original>
    <variation>S</variation>
    <location>
        <position position="477"/>
    </location>
</feature>
<feature type="sequence variant" id="VAR_035172" description="In dbSNP:rs2073290.">
    <original>H</original>
    <variation>Q</variation>
    <location>
        <position position="687"/>
    </location>
</feature>
<accession>Q5TEA6</accession>
<accession>B4DXX5</accession>
<protein>
    <recommendedName>
        <fullName>Protein sel-1 homolog 2</fullName>
    </recommendedName>
    <alternativeName>
        <fullName>Suppressor of lin-12-like protein 2</fullName>
        <shortName>Sel-1L2</shortName>
    </alternativeName>
</protein>
<reference key="1">
    <citation type="journal article" date="2004" name="Nat. Genet.">
        <title>Complete sequencing and characterization of 21,243 full-length human cDNAs.</title>
        <authorList>
            <person name="Ota T."/>
            <person name="Suzuki Y."/>
            <person name="Nishikawa T."/>
            <person name="Otsuki T."/>
            <person name="Sugiyama T."/>
            <person name="Irie R."/>
            <person name="Wakamatsu A."/>
            <person name="Hayashi K."/>
            <person name="Sato H."/>
            <person name="Nagai K."/>
            <person name="Kimura K."/>
            <person name="Makita H."/>
            <person name="Sekine M."/>
            <person name="Obayashi M."/>
            <person name="Nishi T."/>
            <person name="Shibahara T."/>
            <person name="Tanaka T."/>
            <person name="Ishii S."/>
            <person name="Yamamoto J."/>
            <person name="Saito K."/>
            <person name="Kawai Y."/>
            <person name="Isono Y."/>
            <person name="Nakamura Y."/>
            <person name="Nagahari K."/>
            <person name="Murakami K."/>
            <person name="Yasuda T."/>
            <person name="Iwayanagi T."/>
            <person name="Wagatsuma M."/>
            <person name="Shiratori A."/>
            <person name="Sudo H."/>
            <person name="Hosoiri T."/>
            <person name="Kaku Y."/>
            <person name="Kodaira H."/>
            <person name="Kondo H."/>
            <person name="Sugawara M."/>
            <person name="Takahashi M."/>
            <person name="Kanda K."/>
            <person name="Yokoi T."/>
            <person name="Furuya T."/>
            <person name="Kikkawa E."/>
            <person name="Omura Y."/>
            <person name="Abe K."/>
            <person name="Kamihara K."/>
            <person name="Katsuta N."/>
            <person name="Sato K."/>
            <person name="Tanikawa M."/>
            <person name="Yamazaki M."/>
            <person name="Ninomiya K."/>
            <person name="Ishibashi T."/>
            <person name="Yamashita H."/>
            <person name="Murakawa K."/>
            <person name="Fujimori K."/>
            <person name="Tanai H."/>
            <person name="Kimata M."/>
            <person name="Watanabe M."/>
            <person name="Hiraoka S."/>
            <person name="Chiba Y."/>
            <person name="Ishida S."/>
            <person name="Ono Y."/>
            <person name="Takiguchi S."/>
            <person name="Watanabe S."/>
            <person name="Yosida M."/>
            <person name="Hotuta T."/>
            <person name="Kusano J."/>
            <person name="Kanehori K."/>
            <person name="Takahashi-Fujii A."/>
            <person name="Hara H."/>
            <person name="Tanase T.-O."/>
            <person name="Nomura Y."/>
            <person name="Togiya S."/>
            <person name="Komai F."/>
            <person name="Hara R."/>
            <person name="Takeuchi K."/>
            <person name="Arita M."/>
            <person name="Imose N."/>
            <person name="Musashino K."/>
            <person name="Yuuki H."/>
            <person name="Oshima A."/>
            <person name="Sasaki N."/>
            <person name="Aotsuka S."/>
            <person name="Yoshikawa Y."/>
            <person name="Matsunawa H."/>
            <person name="Ichihara T."/>
            <person name="Shiohata N."/>
            <person name="Sano S."/>
            <person name="Moriya S."/>
            <person name="Momiyama H."/>
            <person name="Satoh N."/>
            <person name="Takami S."/>
            <person name="Terashima Y."/>
            <person name="Suzuki O."/>
            <person name="Nakagawa S."/>
            <person name="Senoh A."/>
            <person name="Mizoguchi H."/>
            <person name="Goto Y."/>
            <person name="Shimizu F."/>
            <person name="Wakebe H."/>
            <person name="Hishigaki H."/>
            <person name="Watanabe T."/>
            <person name="Sugiyama A."/>
            <person name="Takemoto M."/>
            <person name="Kawakami B."/>
            <person name="Yamazaki M."/>
            <person name="Watanabe K."/>
            <person name="Kumagai A."/>
            <person name="Itakura S."/>
            <person name="Fukuzumi Y."/>
            <person name="Fujimori Y."/>
            <person name="Komiyama M."/>
            <person name="Tashiro H."/>
            <person name="Tanigami A."/>
            <person name="Fujiwara T."/>
            <person name="Ono T."/>
            <person name="Yamada K."/>
            <person name="Fujii Y."/>
            <person name="Ozaki K."/>
            <person name="Hirao M."/>
            <person name="Ohmori Y."/>
            <person name="Kawabata A."/>
            <person name="Hikiji T."/>
            <person name="Kobatake N."/>
            <person name="Inagaki H."/>
            <person name="Ikema Y."/>
            <person name="Okamoto S."/>
            <person name="Okitani R."/>
            <person name="Kawakami T."/>
            <person name="Noguchi S."/>
            <person name="Itoh T."/>
            <person name="Shigeta K."/>
            <person name="Senba T."/>
            <person name="Matsumura K."/>
            <person name="Nakajima Y."/>
            <person name="Mizuno T."/>
            <person name="Morinaga M."/>
            <person name="Sasaki M."/>
            <person name="Togashi T."/>
            <person name="Oyama M."/>
            <person name="Hata H."/>
            <person name="Watanabe M."/>
            <person name="Komatsu T."/>
            <person name="Mizushima-Sugano J."/>
            <person name="Satoh T."/>
            <person name="Shirai Y."/>
            <person name="Takahashi Y."/>
            <person name="Nakagawa K."/>
            <person name="Okumura K."/>
            <person name="Nagase T."/>
            <person name="Nomura N."/>
            <person name="Kikuchi H."/>
            <person name="Masuho Y."/>
            <person name="Yamashita R."/>
            <person name="Nakai K."/>
            <person name="Yada T."/>
            <person name="Nakamura Y."/>
            <person name="Ohara O."/>
            <person name="Isogai T."/>
            <person name="Sugano S."/>
        </authorList>
    </citation>
    <scope>NUCLEOTIDE SEQUENCE [LARGE SCALE MRNA] (ISOFORM 2)</scope>
    <source>
        <tissue>Testis</tissue>
    </source>
</reference>
<reference key="2">
    <citation type="journal article" date="2001" name="Nature">
        <title>The DNA sequence and comparative analysis of human chromosome 20.</title>
        <authorList>
            <person name="Deloukas P."/>
            <person name="Matthews L.H."/>
            <person name="Ashurst J.L."/>
            <person name="Burton J."/>
            <person name="Gilbert J.G.R."/>
            <person name="Jones M."/>
            <person name="Stavrides G."/>
            <person name="Almeida J.P."/>
            <person name="Babbage A.K."/>
            <person name="Bagguley C.L."/>
            <person name="Bailey J."/>
            <person name="Barlow K.F."/>
            <person name="Bates K.N."/>
            <person name="Beard L.M."/>
            <person name="Beare D.M."/>
            <person name="Beasley O.P."/>
            <person name="Bird C.P."/>
            <person name="Blakey S.E."/>
            <person name="Bridgeman A.M."/>
            <person name="Brown A.J."/>
            <person name="Buck D."/>
            <person name="Burrill W.D."/>
            <person name="Butler A.P."/>
            <person name="Carder C."/>
            <person name="Carter N.P."/>
            <person name="Chapman J.C."/>
            <person name="Clamp M."/>
            <person name="Clark G."/>
            <person name="Clark L.N."/>
            <person name="Clark S.Y."/>
            <person name="Clee C.M."/>
            <person name="Clegg S."/>
            <person name="Cobley V.E."/>
            <person name="Collier R.E."/>
            <person name="Connor R.E."/>
            <person name="Corby N.R."/>
            <person name="Coulson A."/>
            <person name="Coville G.J."/>
            <person name="Deadman R."/>
            <person name="Dhami P.D."/>
            <person name="Dunn M."/>
            <person name="Ellington A.G."/>
            <person name="Frankland J.A."/>
            <person name="Fraser A."/>
            <person name="French L."/>
            <person name="Garner P."/>
            <person name="Grafham D.V."/>
            <person name="Griffiths C."/>
            <person name="Griffiths M.N.D."/>
            <person name="Gwilliam R."/>
            <person name="Hall R.E."/>
            <person name="Hammond S."/>
            <person name="Harley J.L."/>
            <person name="Heath P.D."/>
            <person name="Ho S."/>
            <person name="Holden J.L."/>
            <person name="Howden P.J."/>
            <person name="Huckle E."/>
            <person name="Hunt A.R."/>
            <person name="Hunt S.E."/>
            <person name="Jekosch K."/>
            <person name="Johnson C.M."/>
            <person name="Johnson D."/>
            <person name="Kay M.P."/>
            <person name="Kimberley A.M."/>
            <person name="King A."/>
            <person name="Knights A."/>
            <person name="Laird G.K."/>
            <person name="Lawlor S."/>
            <person name="Lehvaeslaiho M.H."/>
            <person name="Leversha M.A."/>
            <person name="Lloyd C."/>
            <person name="Lloyd D.M."/>
            <person name="Lovell J.D."/>
            <person name="Marsh V.L."/>
            <person name="Martin S.L."/>
            <person name="McConnachie L.J."/>
            <person name="McLay K."/>
            <person name="McMurray A.A."/>
            <person name="Milne S.A."/>
            <person name="Mistry D."/>
            <person name="Moore M.J.F."/>
            <person name="Mullikin J.C."/>
            <person name="Nickerson T."/>
            <person name="Oliver K."/>
            <person name="Parker A."/>
            <person name="Patel R."/>
            <person name="Pearce T.A.V."/>
            <person name="Peck A.I."/>
            <person name="Phillimore B.J.C.T."/>
            <person name="Prathalingam S.R."/>
            <person name="Plumb R.W."/>
            <person name="Ramsay H."/>
            <person name="Rice C.M."/>
            <person name="Ross M.T."/>
            <person name="Scott C.E."/>
            <person name="Sehra H.K."/>
            <person name="Shownkeen R."/>
            <person name="Sims S."/>
            <person name="Skuce C.D."/>
            <person name="Smith M.L."/>
            <person name="Soderlund C."/>
            <person name="Steward C.A."/>
            <person name="Sulston J.E."/>
            <person name="Swann R.M."/>
            <person name="Sycamore N."/>
            <person name="Taylor R."/>
            <person name="Tee L."/>
            <person name="Thomas D.W."/>
            <person name="Thorpe A."/>
            <person name="Tracey A."/>
            <person name="Tromans A.C."/>
            <person name="Vaudin M."/>
            <person name="Wall M."/>
            <person name="Wallis J.M."/>
            <person name="Whitehead S.L."/>
            <person name="Whittaker P."/>
            <person name="Willey D.L."/>
            <person name="Williams L."/>
            <person name="Williams S.A."/>
            <person name="Wilming L."/>
            <person name="Wray P.W."/>
            <person name="Hubbard T."/>
            <person name="Durbin R.M."/>
            <person name="Bentley D.R."/>
            <person name="Beck S."/>
            <person name="Rogers J."/>
        </authorList>
    </citation>
    <scope>NUCLEOTIDE SEQUENCE [LARGE SCALE GENOMIC DNA]</scope>
</reference>
<reference key="3">
    <citation type="journal article" date="2019" name="J. Proteome Res.">
        <title>Cell Type-Specific Expression of Testis Elevated Genes Based on Transcriptomics and Antibody-Based Proteomics.</title>
        <authorList>
            <person name="Pineau C."/>
            <person name="Hikmet F."/>
            <person name="Zhang C."/>
            <person name="Oksvold P."/>
            <person name="Chen S."/>
            <person name="Fagerberg L."/>
            <person name="Uhlen M."/>
            <person name="Lindskog C."/>
        </authorList>
    </citation>
    <scope>SUBCELLULAR LOCATION</scope>
</reference>
<reference key="4">
    <citation type="journal article" date="2024" name="Nat. Commun.">
        <title>Uncovering structural themes across cilia microtubule inner proteins with implications for human cilia function.</title>
        <authorList>
            <person name="Andersen J.S."/>
            <person name="Vijayakumaran A."/>
            <person name="Godbehere C."/>
            <person name="Lorentzen E."/>
            <person name="Mennella V."/>
            <person name="Schou K.B."/>
        </authorList>
    </citation>
    <scope>SUBCELLULAR LOCATION</scope>
</reference>
<name>SE1L2_HUMAN</name>
<keyword id="KW-0025">Alternative splicing</keyword>
<keyword id="KW-0966">Cell projection</keyword>
<keyword id="KW-0325">Glycoprotein</keyword>
<keyword id="KW-0472">Membrane</keyword>
<keyword id="KW-0539">Nucleus</keyword>
<keyword id="KW-1267">Proteomics identification</keyword>
<keyword id="KW-1185">Reference proteome</keyword>
<keyword id="KW-0677">Repeat</keyword>
<keyword id="KW-0732">Signal</keyword>
<keyword id="KW-0812">Transmembrane</keyword>
<keyword id="KW-1133">Transmembrane helix</keyword>
<organism>
    <name type="scientific">Homo sapiens</name>
    <name type="common">Human</name>
    <dbReference type="NCBI Taxonomy" id="9606"/>
    <lineage>
        <taxon>Eukaryota</taxon>
        <taxon>Metazoa</taxon>
        <taxon>Chordata</taxon>
        <taxon>Craniata</taxon>
        <taxon>Vertebrata</taxon>
        <taxon>Euteleostomi</taxon>
        <taxon>Mammalia</taxon>
        <taxon>Eutheria</taxon>
        <taxon>Euarchontoglires</taxon>
        <taxon>Primates</taxon>
        <taxon>Haplorrhini</taxon>
        <taxon>Catarrhini</taxon>
        <taxon>Hominidae</taxon>
        <taxon>Homo</taxon>
    </lineage>
</organism>
<dbReference type="EMBL" id="AL109657">
    <property type="status" value="NOT_ANNOTATED_CDS"/>
    <property type="molecule type" value="Genomic_DNA"/>
</dbReference>
<dbReference type="EMBL" id="AL117333">
    <property type="status" value="NOT_ANNOTATED_CDS"/>
    <property type="molecule type" value="Genomic_DNA"/>
</dbReference>
<dbReference type="EMBL" id="AL354683">
    <property type="status" value="NOT_ANNOTATED_CDS"/>
    <property type="molecule type" value="Genomic_DNA"/>
</dbReference>
<dbReference type="EMBL" id="AK302170">
    <property type="protein sequence ID" value="BAG63537.1"/>
    <property type="molecule type" value="mRNA"/>
</dbReference>
<dbReference type="CCDS" id="CCDS59443.1">
    <molecule id="Q5TEA6-2"/>
</dbReference>
<dbReference type="RefSeq" id="NP_001258468.1">
    <molecule id="Q5TEA6-2"/>
    <property type="nucleotide sequence ID" value="NM_001271539.2"/>
</dbReference>
<dbReference type="RefSeq" id="NP_079505.1">
    <molecule id="Q5TEA6-1"/>
    <property type="nucleotide sequence ID" value="NM_025229.2"/>
</dbReference>
<dbReference type="RefSeq" id="XP_006723710.1">
    <property type="nucleotide sequence ID" value="XM_006723647.2"/>
</dbReference>
<dbReference type="SMR" id="Q5TEA6"/>
<dbReference type="BioGRID" id="123250">
    <property type="interactions" value="5"/>
</dbReference>
<dbReference type="FunCoup" id="Q5TEA6">
    <property type="interactions" value="548"/>
</dbReference>
<dbReference type="IntAct" id="Q5TEA6">
    <property type="interactions" value="5"/>
</dbReference>
<dbReference type="STRING" id="9606.ENSP00000367312"/>
<dbReference type="GlyCosmos" id="Q5TEA6">
    <property type="glycosylation" value="1 site, No reported glycans"/>
</dbReference>
<dbReference type="GlyGen" id="Q5TEA6">
    <property type="glycosylation" value="1 site"/>
</dbReference>
<dbReference type="iPTMnet" id="Q5TEA6"/>
<dbReference type="PhosphoSitePlus" id="Q5TEA6"/>
<dbReference type="BioMuta" id="SEL1L2"/>
<dbReference type="DMDM" id="158706355"/>
<dbReference type="jPOST" id="Q5TEA6"/>
<dbReference type="MassIVE" id="Q5TEA6"/>
<dbReference type="PeptideAtlas" id="Q5TEA6"/>
<dbReference type="ProteomicsDB" id="5476"/>
<dbReference type="ProteomicsDB" id="65040">
    <molecule id="Q5TEA6-1"/>
</dbReference>
<dbReference type="Antibodypedia" id="67355">
    <property type="antibodies" value="16 antibodies from 8 providers"/>
</dbReference>
<dbReference type="DNASU" id="80343"/>
<dbReference type="Ensembl" id="ENST00000284951.10">
    <molecule id="Q5TEA6-1"/>
    <property type="protein sequence ID" value="ENSP00000284951.5"/>
    <property type="gene ID" value="ENSG00000101251.13"/>
</dbReference>
<dbReference type="Ensembl" id="ENST00000378072.5">
    <molecule id="Q5TEA6-2"/>
    <property type="protein sequence ID" value="ENSP00000367312.5"/>
    <property type="gene ID" value="ENSG00000101251.13"/>
</dbReference>
<dbReference type="Ensembl" id="ENST00000707932.1">
    <molecule id="Q5TEA6-1"/>
    <property type="protein sequence ID" value="ENSP00000517041.1"/>
    <property type="gene ID" value="ENSG00000291539.1"/>
</dbReference>
<dbReference type="Ensembl" id="ENST00000707935.1">
    <molecule id="Q5TEA6-2"/>
    <property type="protein sequence ID" value="ENSP00000517044.1"/>
    <property type="gene ID" value="ENSG00000291539.1"/>
</dbReference>
<dbReference type="GeneID" id="80343"/>
<dbReference type="KEGG" id="hsa:80343"/>
<dbReference type="MANE-Select" id="ENST00000284951.10">
    <property type="protein sequence ID" value="ENSP00000284951.5"/>
    <property type="RefSeq nucleotide sequence ID" value="NM_025229.2"/>
    <property type="RefSeq protein sequence ID" value="NP_079505.1"/>
</dbReference>
<dbReference type="UCSC" id="uc010zrl.4">
    <molecule id="Q5TEA6-1"/>
    <property type="organism name" value="human"/>
</dbReference>
<dbReference type="AGR" id="HGNC:15897"/>
<dbReference type="CTD" id="80343"/>
<dbReference type="DisGeNET" id="80343"/>
<dbReference type="GeneCards" id="SEL1L2"/>
<dbReference type="HGNC" id="HGNC:15897">
    <property type="gene designation" value="SEL1L2"/>
</dbReference>
<dbReference type="HPA" id="ENSG00000101251">
    <property type="expression patterns" value="Tissue enriched (testis)"/>
</dbReference>
<dbReference type="MIM" id="614289">
    <property type="type" value="gene"/>
</dbReference>
<dbReference type="neXtProt" id="NX_Q5TEA6"/>
<dbReference type="OpenTargets" id="ENSG00000101251"/>
<dbReference type="PharmGKB" id="PA162402870"/>
<dbReference type="VEuPathDB" id="HostDB:ENSG00000101251"/>
<dbReference type="eggNOG" id="KOG1550">
    <property type="taxonomic scope" value="Eukaryota"/>
</dbReference>
<dbReference type="GeneTree" id="ENSGT00940000161298"/>
<dbReference type="HOGENOM" id="CLU_007931_2_1_1"/>
<dbReference type="InParanoid" id="Q5TEA6"/>
<dbReference type="OMA" id="IAANKYH"/>
<dbReference type="OrthoDB" id="27934at2759"/>
<dbReference type="PAN-GO" id="Q5TEA6">
    <property type="GO annotations" value="2 GO annotations based on evolutionary models"/>
</dbReference>
<dbReference type="PhylomeDB" id="Q5TEA6"/>
<dbReference type="TreeFam" id="TF315257"/>
<dbReference type="PathwayCommons" id="Q5TEA6"/>
<dbReference type="SignaLink" id="Q5TEA6"/>
<dbReference type="BioGRID-ORCS" id="80343">
    <property type="hits" value="7 hits in 1140 CRISPR screens"/>
</dbReference>
<dbReference type="ChiTaRS" id="SEL1L2">
    <property type="organism name" value="human"/>
</dbReference>
<dbReference type="GenomeRNAi" id="80343"/>
<dbReference type="Pharos" id="Q5TEA6">
    <property type="development level" value="Tdark"/>
</dbReference>
<dbReference type="PRO" id="PR:Q5TEA6"/>
<dbReference type="Proteomes" id="UP000005640">
    <property type="component" value="Chromosome 20"/>
</dbReference>
<dbReference type="RNAct" id="Q5TEA6">
    <property type="molecule type" value="protein"/>
</dbReference>
<dbReference type="Bgee" id="ENSG00000101251">
    <property type="expression patterns" value="Expressed in male germ line stem cell (sensu Vertebrata) in testis and 102 other cell types or tissues"/>
</dbReference>
<dbReference type="ExpressionAtlas" id="Q5TEA6">
    <property type="expression patterns" value="baseline and differential"/>
</dbReference>
<dbReference type="GO" id="GO:0005929">
    <property type="term" value="C:cilium"/>
    <property type="evidence" value="ECO:0000314"/>
    <property type="project" value="UniProtKB"/>
</dbReference>
<dbReference type="GO" id="GO:0005789">
    <property type="term" value="C:endoplasmic reticulum membrane"/>
    <property type="evidence" value="ECO:0000318"/>
    <property type="project" value="GO_Central"/>
</dbReference>
<dbReference type="GO" id="GO:0016607">
    <property type="term" value="C:nuclear speck"/>
    <property type="evidence" value="ECO:0000314"/>
    <property type="project" value="UniProtKB"/>
</dbReference>
<dbReference type="GO" id="GO:0036503">
    <property type="term" value="P:ERAD pathway"/>
    <property type="evidence" value="ECO:0000318"/>
    <property type="project" value="GO_Central"/>
</dbReference>
<dbReference type="Gene3D" id="1.25.40.10">
    <property type="entry name" value="Tetratricopeptide repeat domain"/>
    <property type="match status" value="3"/>
</dbReference>
<dbReference type="InterPro" id="IPR006597">
    <property type="entry name" value="Sel1-like"/>
</dbReference>
<dbReference type="InterPro" id="IPR050767">
    <property type="entry name" value="Sel1_AlgK"/>
</dbReference>
<dbReference type="InterPro" id="IPR011990">
    <property type="entry name" value="TPR-like_helical_dom_sf"/>
</dbReference>
<dbReference type="PANTHER" id="PTHR11102:SF53">
    <property type="entry name" value="PROTEIN SEL-1 HOMOLOG 2"/>
    <property type="match status" value="1"/>
</dbReference>
<dbReference type="PANTHER" id="PTHR11102">
    <property type="entry name" value="SEL-1-LIKE PROTEIN"/>
    <property type="match status" value="1"/>
</dbReference>
<dbReference type="Pfam" id="PF08238">
    <property type="entry name" value="Sel1"/>
    <property type="match status" value="11"/>
</dbReference>
<dbReference type="SMART" id="SM00671">
    <property type="entry name" value="SEL1"/>
    <property type="match status" value="11"/>
</dbReference>
<dbReference type="SUPFAM" id="SSF81901">
    <property type="entry name" value="HCP-like"/>
    <property type="match status" value="3"/>
</dbReference>